<evidence type="ECO:0000255" key="1">
    <source>
        <dbReference type="HAMAP-Rule" id="MF_01080"/>
    </source>
</evidence>
<dbReference type="EC" id="5.4.99.25" evidence="1"/>
<dbReference type="EMBL" id="AL591978">
    <property type="protein sequence ID" value="CAC99406.1"/>
    <property type="molecule type" value="Genomic_DNA"/>
</dbReference>
<dbReference type="PIR" id="AH1240">
    <property type="entry name" value="AH1240"/>
</dbReference>
<dbReference type="RefSeq" id="NP_464853.1">
    <property type="nucleotide sequence ID" value="NC_003210.1"/>
</dbReference>
<dbReference type="RefSeq" id="WP_010990096.1">
    <property type="nucleotide sequence ID" value="NZ_CP149495.1"/>
</dbReference>
<dbReference type="SMR" id="Q8Y7F3"/>
<dbReference type="STRING" id="169963.gene:17593985"/>
<dbReference type="PaxDb" id="169963-lmo1328"/>
<dbReference type="EnsemblBacteria" id="CAC99406">
    <property type="protein sequence ID" value="CAC99406"/>
    <property type="gene ID" value="CAC99406"/>
</dbReference>
<dbReference type="GeneID" id="987709"/>
<dbReference type="KEGG" id="lmo:lmo1328"/>
<dbReference type="PATRIC" id="fig|169963.11.peg.1365"/>
<dbReference type="eggNOG" id="COG0130">
    <property type="taxonomic scope" value="Bacteria"/>
</dbReference>
<dbReference type="HOGENOM" id="CLU_032087_0_1_9"/>
<dbReference type="OrthoDB" id="9802309at2"/>
<dbReference type="PhylomeDB" id="Q8Y7F3"/>
<dbReference type="BioCyc" id="LMON169963:LMO1328-MONOMER"/>
<dbReference type="Proteomes" id="UP000000817">
    <property type="component" value="Chromosome"/>
</dbReference>
<dbReference type="GO" id="GO:0009982">
    <property type="term" value="F:pseudouridine synthase activity"/>
    <property type="evidence" value="ECO:0000318"/>
    <property type="project" value="GO_Central"/>
</dbReference>
<dbReference type="GO" id="GO:0003723">
    <property type="term" value="F:RNA binding"/>
    <property type="evidence" value="ECO:0007669"/>
    <property type="project" value="InterPro"/>
</dbReference>
<dbReference type="GO" id="GO:0160148">
    <property type="term" value="F:tRNA pseudouridine(55) synthase activity"/>
    <property type="evidence" value="ECO:0007669"/>
    <property type="project" value="UniProtKB-EC"/>
</dbReference>
<dbReference type="GO" id="GO:1990481">
    <property type="term" value="P:mRNA pseudouridine synthesis"/>
    <property type="evidence" value="ECO:0000318"/>
    <property type="project" value="GO_Central"/>
</dbReference>
<dbReference type="GO" id="GO:0006400">
    <property type="term" value="P:tRNA modification"/>
    <property type="evidence" value="ECO:0000318"/>
    <property type="project" value="GO_Central"/>
</dbReference>
<dbReference type="GO" id="GO:0031119">
    <property type="term" value="P:tRNA pseudouridine synthesis"/>
    <property type="evidence" value="ECO:0007669"/>
    <property type="project" value="UniProtKB-UniRule"/>
</dbReference>
<dbReference type="CDD" id="cd02573">
    <property type="entry name" value="PseudoU_synth_EcTruB"/>
    <property type="match status" value="1"/>
</dbReference>
<dbReference type="FunFam" id="3.30.2350.10:FF:000011">
    <property type="entry name" value="tRNA pseudouridine synthase B"/>
    <property type="match status" value="1"/>
</dbReference>
<dbReference type="Gene3D" id="3.30.2350.10">
    <property type="entry name" value="Pseudouridine synthase"/>
    <property type="match status" value="1"/>
</dbReference>
<dbReference type="HAMAP" id="MF_01080">
    <property type="entry name" value="TruB_bact"/>
    <property type="match status" value="1"/>
</dbReference>
<dbReference type="InterPro" id="IPR020103">
    <property type="entry name" value="PsdUridine_synth_cat_dom_sf"/>
</dbReference>
<dbReference type="InterPro" id="IPR002501">
    <property type="entry name" value="PsdUridine_synth_N"/>
</dbReference>
<dbReference type="InterPro" id="IPR014780">
    <property type="entry name" value="tRNA_psdUridine_synth_TruB"/>
</dbReference>
<dbReference type="InterPro" id="IPR032819">
    <property type="entry name" value="TruB_C"/>
</dbReference>
<dbReference type="NCBIfam" id="TIGR00431">
    <property type="entry name" value="TruB"/>
    <property type="match status" value="1"/>
</dbReference>
<dbReference type="PANTHER" id="PTHR13767:SF2">
    <property type="entry name" value="PSEUDOURIDYLATE SYNTHASE TRUB1"/>
    <property type="match status" value="1"/>
</dbReference>
<dbReference type="PANTHER" id="PTHR13767">
    <property type="entry name" value="TRNA-PSEUDOURIDINE SYNTHASE"/>
    <property type="match status" value="1"/>
</dbReference>
<dbReference type="Pfam" id="PF16198">
    <property type="entry name" value="TruB_C_2"/>
    <property type="match status" value="1"/>
</dbReference>
<dbReference type="Pfam" id="PF01509">
    <property type="entry name" value="TruB_N"/>
    <property type="match status" value="1"/>
</dbReference>
<dbReference type="SUPFAM" id="SSF55120">
    <property type="entry name" value="Pseudouridine synthase"/>
    <property type="match status" value="1"/>
</dbReference>
<keyword id="KW-0413">Isomerase</keyword>
<keyword id="KW-1185">Reference proteome</keyword>
<keyword id="KW-0819">tRNA processing</keyword>
<comment type="function">
    <text evidence="1">Responsible for synthesis of pseudouridine from uracil-55 in the psi GC loop of transfer RNAs.</text>
</comment>
<comment type="catalytic activity">
    <reaction evidence="1">
        <text>uridine(55) in tRNA = pseudouridine(55) in tRNA</text>
        <dbReference type="Rhea" id="RHEA:42532"/>
        <dbReference type="Rhea" id="RHEA-COMP:10101"/>
        <dbReference type="Rhea" id="RHEA-COMP:10102"/>
        <dbReference type="ChEBI" id="CHEBI:65314"/>
        <dbReference type="ChEBI" id="CHEBI:65315"/>
        <dbReference type="EC" id="5.4.99.25"/>
    </reaction>
</comment>
<comment type="similarity">
    <text evidence="1">Belongs to the pseudouridine synthase TruB family. Type 1 subfamily.</text>
</comment>
<sequence length="304" mass="33769">MNGIIPLWKERGMTSHDCVYKLRKILHTKKVGHTGTLDPEVEGVLPICIGRATKLAEYVTDEGKVYVAEITLGKSTTTEDATGETVNTKELAEISAAELQAALTKLTGKITQIPPMFSAVKVNGKKLYEYARAGIEVERPSRQVDIYSLIRLDGDTALNQSNPTFQLEIACGKGTYIRTLAVMIGELLGYPAHMSKLERTRSGFFKKEDCLTLTEIDEMMQASDSSFLYPLEKGIESMAKLVIEEEVYAKVLNGGLLPTSLFAEVENEPRAALIFKDKLTAIYKPHPEKKDLWKPEKVIELNQA</sequence>
<accession>Q8Y7F3</accession>
<feature type="chain" id="PRO_0000121859" description="tRNA pseudouridine synthase B">
    <location>
        <begin position="1"/>
        <end position="304"/>
    </location>
</feature>
<feature type="active site" description="Nucleophile" evidence="1">
    <location>
        <position position="38"/>
    </location>
</feature>
<organism>
    <name type="scientific">Listeria monocytogenes serovar 1/2a (strain ATCC BAA-679 / EGD-e)</name>
    <dbReference type="NCBI Taxonomy" id="169963"/>
    <lineage>
        <taxon>Bacteria</taxon>
        <taxon>Bacillati</taxon>
        <taxon>Bacillota</taxon>
        <taxon>Bacilli</taxon>
        <taxon>Bacillales</taxon>
        <taxon>Listeriaceae</taxon>
        <taxon>Listeria</taxon>
    </lineage>
</organism>
<reference key="1">
    <citation type="journal article" date="2001" name="Science">
        <title>Comparative genomics of Listeria species.</title>
        <authorList>
            <person name="Glaser P."/>
            <person name="Frangeul L."/>
            <person name="Buchrieser C."/>
            <person name="Rusniok C."/>
            <person name="Amend A."/>
            <person name="Baquero F."/>
            <person name="Berche P."/>
            <person name="Bloecker H."/>
            <person name="Brandt P."/>
            <person name="Chakraborty T."/>
            <person name="Charbit A."/>
            <person name="Chetouani F."/>
            <person name="Couve E."/>
            <person name="de Daruvar A."/>
            <person name="Dehoux P."/>
            <person name="Domann E."/>
            <person name="Dominguez-Bernal G."/>
            <person name="Duchaud E."/>
            <person name="Durant L."/>
            <person name="Dussurget O."/>
            <person name="Entian K.-D."/>
            <person name="Fsihi H."/>
            <person name="Garcia-del Portillo F."/>
            <person name="Garrido P."/>
            <person name="Gautier L."/>
            <person name="Goebel W."/>
            <person name="Gomez-Lopez N."/>
            <person name="Hain T."/>
            <person name="Hauf J."/>
            <person name="Jackson D."/>
            <person name="Jones L.-M."/>
            <person name="Kaerst U."/>
            <person name="Kreft J."/>
            <person name="Kuhn M."/>
            <person name="Kunst F."/>
            <person name="Kurapkat G."/>
            <person name="Madueno E."/>
            <person name="Maitournam A."/>
            <person name="Mata Vicente J."/>
            <person name="Ng E."/>
            <person name="Nedjari H."/>
            <person name="Nordsiek G."/>
            <person name="Novella S."/>
            <person name="de Pablos B."/>
            <person name="Perez-Diaz J.-C."/>
            <person name="Purcell R."/>
            <person name="Remmel B."/>
            <person name="Rose M."/>
            <person name="Schlueter T."/>
            <person name="Simoes N."/>
            <person name="Tierrez A."/>
            <person name="Vazquez-Boland J.-A."/>
            <person name="Voss H."/>
            <person name="Wehland J."/>
            <person name="Cossart P."/>
        </authorList>
    </citation>
    <scope>NUCLEOTIDE SEQUENCE [LARGE SCALE GENOMIC DNA]</scope>
    <source>
        <strain>ATCC BAA-679 / EGD-e</strain>
    </source>
</reference>
<gene>
    <name evidence="1" type="primary">truB</name>
    <name type="ordered locus">lmo1328</name>
</gene>
<protein>
    <recommendedName>
        <fullName evidence="1">tRNA pseudouridine synthase B</fullName>
        <ecNumber evidence="1">5.4.99.25</ecNumber>
    </recommendedName>
    <alternativeName>
        <fullName evidence="1">tRNA pseudouridine(55) synthase</fullName>
        <shortName evidence="1">Psi55 synthase</shortName>
    </alternativeName>
    <alternativeName>
        <fullName evidence="1">tRNA pseudouridylate synthase</fullName>
    </alternativeName>
    <alternativeName>
        <fullName evidence="1">tRNA-uridine isomerase</fullName>
    </alternativeName>
</protein>
<proteinExistence type="inferred from homology"/>
<name>TRUB_LISMO</name>